<gene>
    <name evidence="2" type="primary">infB</name>
    <name type="ordered locus">BF0219</name>
</gene>
<name>IF2_BACFN</name>
<keyword id="KW-0963">Cytoplasm</keyword>
<keyword id="KW-0342">GTP-binding</keyword>
<keyword id="KW-0396">Initiation factor</keyword>
<keyword id="KW-0547">Nucleotide-binding</keyword>
<keyword id="KW-0648">Protein biosynthesis</keyword>
<evidence type="ECO:0000250" key="1"/>
<evidence type="ECO:0000255" key="2">
    <source>
        <dbReference type="HAMAP-Rule" id="MF_00100"/>
    </source>
</evidence>
<evidence type="ECO:0000256" key="3">
    <source>
        <dbReference type="SAM" id="MobiDB-lite"/>
    </source>
</evidence>
<accession>Q5LIN1</accession>
<feature type="chain" id="PRO_0000228169" description="Translation initiation factor IF-2">
    <location>
        <begin position="1"/>
        <end position="1015"/>
    </location>
</feature>
<feature type="domain" description="tr-type G">
    <location>
        <begin position="514"/>
        <end position="684"/>
    </location>
</feature>
<feature type="region of interest" description="Disordered" evidence="3">
    <location>
        <begin position="124"/>
        <end position="144"/>
    </location>
</feature>
<feature type="region of interest" description="Disordered" evidence="3">
    <location>
        <begin position="159"/>
        <end position="179"/>
    </location>
</feature>
<feature type="region of interest" description="Disordered" evidence="3">
    <location>
        <begin position="196"/>
        <end position="230"/>
    </location>
</feature>
<feature type="region of interest" description="Disordered" evidence="3">
    <location>
        <begin position="250"/>
        <end position="386"/>
    </location>
</feature>
<feature type="region of interest" description="G1" evidence="1">
    <location>
        <begin position="523"/>
        <end position="530"/>
    </location>
</feature>
<feature type="region of interest" description="G2" evidence="1">
    <location>
        <begin position="548"/>
        <end position="552"/>
    </location>
</feature>
<feature type="region of interest" description="G3" evidence="1">
    <location>
        <begin position="570"/>
        <end position="573"/>
    </location>
</feature>
<feature type="region of interest" description="G4" evidence="1">
    <location>
        <begin position="624"/>
        <end position="627"/>
    </location>
</feature>
<feature type="region of interest" description="G5" evidence="1">
    <location>
        <begin position="660"/>
        <end position="662"/>
    </location>
</feature>
<feature type="compositionally biased region" description="Basic and acidic residues" evidence="3">
    <location>
        <begin position="196"/>
        <end position="217"/>
    </location>
</feature>
<feature type="compositionally biased region" description="Basic and acidic residues" evidence="3">
    <location>
        <begin position="265"/>
        <end position="315"/>
    </location>
</feature>
<feature type="binding site" evidence="2">
    <location>
        <begin position="523"/>
        <end position="530"/>
    </location>
    <ligand>
        <name>GTP</name>
        <dbReference type="ChEBI" id="CHEBI:37565"/>
    </ligand>
</feature>
<feature type="binding site" evidence="2">
    <location>
        <begin position="570"/>
        <end position="574"/>
    </location>
    <ligand>
        <name>GTP</name>
        <dbReference type="ChEBI" id="CHEBI:37565"/>
    </ligand>
</feature>
<feature type="binding site" evidence="2">
    <location>
        <begin position="624"/>
        <end position="627"/>
    </location>
    <ligand>
        <name>GTP</name>
        <dbReference type="ChEBI" id="CHEBI:37565"/>
    </ligand>
</feature>
<organism>
    <name type="scientific">Bacteroides fragilis (strain ATCC 25285 / DSM 2151 / CCUG 4856 / JCM 11019 / LMG 10263 / NCTC 9343 / Onslow / VPI 2553 / EN-2)</name>
    <dbReference type="NCBI Taxonomy" id="272559"/>
    <lineage>
        <taxon>Bacteria</taxon>
        <taxon>Pseudomonadati</taxon>
        <taxon>Bacteroidota</taxon>
        <taxon>Bacteroidia</taxon>
        <taxon>Bacteroidales</taxon>
        <taxon>Bacteroidaceae</taxon>
        <taxon>Bacteroides</taxon>
    </lineage>
</organism>
<sequence>MTIRLNKVTRDLNVGIATVVEFLQKKGYTVEANPNTKITEEQYAMLVKEFSTDKNLRLESERFIQERQNKDRNKASVSIDGYDKKEPEKTVADDVIKTVIPEDVRPKFKPVGKIDLDKLNRKVEKEPVKEEPKPQPVAAEEKKVAEEVKPVVNEVKKEEVTVTPATSEPKPVKEEPKPVVVEKPVETEKKVVEEVKKEEPKVVVSPEKTEKKEEKPVAEAPVTPVEKEEEGVFKIRPTEFVSKINVIGQIDLAALNQSTRPKKKSKEEKRKEREEKEKLRQDQKKQMKEAIIKEIRKEDSKQAKVVGKENLDPNGKKKRNRINNNKEKVDVNNVASNFAHPTPNSERTNNNRGGNQQGGGGQNRNRNNNNKDRFKKPVVKQEVSEEDVAKQVKETLARLTSKGKNKGAKYRKEKRDMASNRMQELEDQEMAESKVLKLTEFVTANELASMMNVSVNQVIGTCMSIGMMVSINQRLDAETINLVAEEFGFKTEYVSAEVAQAIVEEEDAPEDLEHRAPIVTVMGHVDHGKTSLLDYIRKANVIAGEAGGITQHIGAYHVTLEDGRKITFLDTPGHEAFTAMRARGAKVTDIAIIIVAADDDVMPQTKEAINHAAAAGVPIVFAINKIDKPHANPEKIKETLAQMNYLVEEWGGKYQSQDISAKKGLGVPELMEKVLLEAEMLDLKANPNRNATGSIIESTLDKGRGYVATVLVSNGTLKVGDIVLAGTSYGRVKAMFNERNQRVAQAGPSEPVLILGLNGAPAAGDTFHVIETDQEAREIANKREQLQREQGLRTQKLLTLDEVGRRIALGNFQELNVIVKGDVDGSIEALSDSLIKLSTEQIQVNVIHKAVGQISESDVTLAAASDAIIIGFQVRPSASARKFAEQEGVDIRLYSVIYAAIEEVKAAMEGMLAPEVKEVVTATIEVREVFHITKVGTVAGAVVKEGKVKRSDKARLIRDGIVIFSGSINALKRFKDDVKEVGTNFECGISLVNYNDLKVGDMIETYEEVEVKQTL</sequence>
<reference key="1">
    <citation type="journal article" date="2005" name="Science">
        <title>Extensive DNA inversions in the B. fragilis genome control variable gene expression.</title>
        <authorList>
            <person name="Cerdeno-Tarraga A.-M."/>
            <person name="Patrick S."/>
            <person name="Crossman L.C."/>
            <person name="Blakely G."/>
            <person name="Abratt V."/>
            <person name="Lennard N."/>
            <person name="Poxton I."/>
            <person name="Duerden B."/>
            <person name="Harris B."/>
            <person name="Quail M.A."/>
            <person name="Barron A."/>
            <person name="Clark L."/>
            <person name="Corton C."/>
            <person name="Doggett J."/>
            <person name="Holden M.T.G."/>
            <person name="Larke N."/>
            <person name="Line A."/>
            <person name="Lord A."/>
            <person name="Norbertczak H."/>
            <person name="Ormond D."/>
            <person name="Price C."/>
            <person name="Rabbinowitsch E."/>
            <person name="Woodward J."/>
            <person name="Barrell B.G."/>
            <person name="Parkhill J."/>
        </authorList>
    </citation>
    <scope>NUCLEOTIDE SEQUENCE [LARGE SCALE GENOMIC DNA]</scope>
    <source>
        <strain>ATCC 25285 / DSM 2151 / CCUG 4856 / JCM 11019 / LMG 10263 / NCTC 9343 / Onslow / VPI 2553 / EN-2</strain>
    </source>
</reference>
<comment type="function">
    <text evidence="2">One of the essential components for the initiation of protein synthesis. Protects formylmethionyl-tRNA from spontaneous hydrolysis and promotes its binding to the 30S ribosomal subunits. Also involved in the hydrolysis of GTP during the formation of the 70S ribosomal complex.</text>
</comment>
<comment type="subcellular location">
    <subcellularLocation>
        <location evidence="2">Cytoplasm</location>
    </subcellularLocation>
</comment>
<comment type="similarity">
    <text evidence="2">Belongs to the TRAFAC class translation factor GTPase superfamily. Classic translation factor GTPase family. IF-2 subfamily.</text>
</comment>
<protein>
    <recommendedName>
        <fullName evidence="2">Translation initiation factor IF-2</fullName>
    </recommendedName>
</protein>
<dbReference type="EMBL" id="CR626927">
    <property type="protein sequence ID" value="CAH05995.1"/>
    <property type="molecule type" value="Genomic_DNA"/>
</dbReference>
<dbReference type="RefSeq" id="WP_005783920.1">
    <property type="nucleotide sequence ID" value="NZ_UFTH01000001.1"/>
</dbReference>
<dbReference type="SMR" id="Q5LIN1"/>
<dbReference type="PaxDb" id="272559-BF9343_0216"/>
<dbReference type="GeneID" id="60369796"/>
<dbReference type="KEGG" id="bfs:BF9343_0216"/>
<dbReference type="eggNOG" id="COG0532">
    <property type="taxonomic scope" value="Bacteria"/>
</dbReference>
<dbReference type="HOGENOM" id="CLU_006301_0_0_10"/>
<dbReference type="Proteomes" id="UP000006731">
    <property type="component" value="Chromosome"/>
</dbReference>
<dbReference type="GO" id="GO:0005737">
    <property type="term" value="C:cytoplasm"/>
    <property type="evidence" value="ECO:0007669"/>
    <property type="project" value="UniProtKB-SubCell"/>
</dbReference>
<dbReference type="GO" id="GO:0005525">
    <property type="term" value="F:GTP binding"/>
    <property type="evidence" value="ECO:0007669"/>
    <property type="project" value="UniProtKB-KW"/>
</dbReference>
<dbReference type="GO" id="GO:0003924">
    <property type="term" value="F:GTPase activity"/>
    <property type="evidence" value="ECO:0007669"/>
    <property type="project" value="UniProtKB-UniRule"/>
</dbReference>
<dbReference type="GO" id="GO:0003743">
    <property type="term" value="F:translation initiation factor activity"/>
    <property type="evidence" value="ECO:0007669"/>
    <property type="project" value="UniProtKB-UniRule"/>
</dbReference>
<dbReference type="CDD" id="cd01887">
    <property type="entry name" value="IF2_eIF5B"/>
    <property type="match status" value="1"/>
</dbReference>
<dbReference type="CDD" id="cd03702">
    <property type="entry name" value="IF2_mtIF2_II"/>
    <property type="match status" value="1"/>
</dbReference>
<dbReference type="CDD" id="cd03692">
    <property type="entry name" value="mtIF2_IVc"/>
    <property type="match status" value="1"/>
</dbReference>
<dbReference type="FunFam" id="2.40.30.10:FF:000007">
    <property type="entry name" value="Translation initiation factor IF-2"/>
    <property type="match status" value="1"/>
</dbReference>
<dbReference type="FunFam" id="2.40.30.10:FF:000008">
    <property type="entry name" value="Translation initiation factor IF-2"/>
    <property type="match status" value="1"/>
</dbReference>
<dbReference type="FunFam" id="3.40.50.10050:FF:000001">
    <property type="entry name" value="Translation initiation factor IF-2"/>
    <property type="match status" value="1"/>
</dbReference>
<dbReference type="FunFam" id="3.40.50.300:FF:000019">
    <property type="entry name" value="Translation initiation factor IF-2"/>
    <property type="match status" value="1"/>
</dbReference>
<dbReference type="Gene3D" id="3.40.50.300">
    <property type="entry name" value="P-loop containing nucleotide triphosphate hydrolases"/>
    <property type="match status" value="1"/>
</dbReference>
<dbReference type="Gene3D" id="2.40.30.10">
    <property type="entry name" value="Translation factors"/>
    <property type="match status" value="2"/>
</dbReference>
<dbReference type="Gene3D" id="3.40.50.10050">
    <property type="entry name" value="Translation initiation factor IF- 2, domain 3"/>
    <property type="match status" value="1"/>
</dbReference>
<dbReference type="HAMAP" id="MF_00100_B">
    <property type="entry name" value="IF_2_B"/>
    <property type="match status" value="1"/>
</dbReference>
<dbReference type="InterPro" id="IPR053905">
    <property type="entry name" value="EF-G-like_DII"/>
</dbReference>
<dbReference type="InterPro" id="IPR044145">
    <property type="entry name" value="IF2_II"/>
</dbReference>
<dbReference type="InterPro" id="IPR006847">
    <property type="entry name" value="IF2_N"/>
</dbReference>
<dbReference type="InterPro" id="IPR027417">
    <property type="entry name" value="P-loop_NTPase"/>
</dbReference>
<dbReference type="InterPro" id="IPR005225">
    <property type="entry name" value="Small_GTP-bd"/>
</dbReference>
<dbReference type="InterPro" id="IPR000795">
    <property type="entry name" value="T_Tr_GTP-bd_dom"/>
</dbReference>
<dbReference type="InterPro" id="IPR000178">
    <property type="entry name" value="TF_IF2_bacterial-like"/>
</dbReference>
<dbReference type="InterPro" id="IPR015760">
    <property type="entry name" value="TIF_IF2"/>
</dbReference>
<dbReference type="InterPro" id="IPR023115">
    <property type="entry name" value="TIF_IF2_dom3"/>
</dbReference>
<dbReference type="InterPro" id="IPR036925">
    <property type="entry name" value="TIF_IF2_dom3_sf"/>
</dbReference>
<dbReference type="InterPro" id="IPR009000">
    <property type="entry name" value="Transl_B-barrel_sf"/>
</dbReference>
<dbReference type="NCBIfam" id="TIGR00487">
    <property type="entry name" value="IF-2"/>
    <property type="match status" value="1"/>
</dbReference>
<dbReference type="NCBIfam" id="TIGR00231">
    <property type="entry name" value="small_GTP"/>
    <property type="match status" value="1"/>
</dbReference>
<dbReference type="PANTHER" id="PTHR43381:SF5">
    <property type="entry name" value="TR-TYPE G DOMAIN-CONTAINING PROTEIN"/>
    <property type="match status" value="1"/>
</dbReference>
<dbReference type="PANTHER" id="PTHR43381">
    <property type="entry name" value="TRANSLATION INITIATION FACTOR IF-2-RELATED"/>
    <property type="match status" value="1"/>
</dbReference>
<dbReference type="Pfam" id="PF22042">
    <property type="entry name" value="EF-G_D2"/>
    <property type="match status" value="1"/>
</dbReference>
<dbReference type="Pfam" id="PF00009">
    <property type="entry name" value="GTP_EFTU"/>
    <property type="match status" value="1"/>
</dbReference>
<dbReference type="Pfam" id="PF11987">
    <property type="entry name" value="IF-2"/>
    <property type="match status" value="1"/>
</dbReference>
<dbReference type="Pfam" id="PF04760">
    <property type="entry name" value="IF2_N"/>
    <property type="match status" value="1"/>
</dbReference>
<dbReference type="SUPFAM" id="SSF52156">
    <property type="entry name" value="Initiation factor IF2/eIF5b, domain 3"/>
    <property type="match status" value="1"/>
</dbReference>
<dbReference type="SUPFAM" id="SSF52540">
    <property type="entry name" value="P-loop containing nucleoside triphosphate hydrolases"/>
    <property type="match status" value="1"/>
</dbReference>
<dbReference type="SUPFAM" id="SSF50447">
    <property type="entry name" value="Translation proteins"/>
    <property type="match status" value="2"/>
</dbReference>
<dbReference type="PROSITE" id="PS51722">
    <property type="entry name" value="G_TR_2"/>
    <property type="match status" value="1"/>
</dbReference>
<dbReference type="PROSITE" id="PS01176">
    <property type="entry name" value="IF2"/>
    <property type="match status" value="1"/>
</dbReference>
<proteinExistence type="inferred from homology"/>